<dbReference type="EMBL" id="CP000096">
    <property type="protein sequence ID" value="ABB23831.1"/>
    <property type="molecule type" value="Genomic_DNA"/>
</dbReference>
<dbReference type="RefSeq" id="WP_011357705.1">
    <property type="nucleotide sequence ID" value="NC_007512.1"/>
</dbReference>
<dbReference type="SMR" id="Q3B4A0"/>
<dbReference type="STRING" id="319225.Plut_0969"/>
<dbReference type="KEGG" id="plt:Plut_0969"/>
<dbReference type="eggNOG" id="COG0335">
    <property type="taxonomic scope" value="Bacteria"/>
</dbReference>
<dbReference type="HOGENOM" id="CLU_103507_2_2_10"/>
<dbReference type="OrthoDB" id="9803541at2"/>
<dbReference type="Proteomes" id="UP000002709">
    <property type="component" value="Chromosome"/>
</dbReference>
<dbReference type="GO" id="GO:0022625">
    <property type="term" value="C:cytosolic large ribosomal subunit"/>
    <property type="evidence" value="ECO:0007669"/>
    <property type="project" value="TreeGrafter"/>
</dbReference>
<dbReference type="GO" id="GO:0003735">
    <property type="term" value="F:structural constituent of ribosome"/>
    <property type="evidence" value="ECO:0007669"/>
    <property type="project" value="InterPro"/>
</dbReference>
<dbReference type="GO" id="GO:0006412">
    <property type="term" value="P:translation"/>
    <property type="evidence" value="ECO:0007669"/>
    <property type="project" value="UniProtKB-UniRule"/>
</dbReference>
<dbReference type="Gene3D" id="2.30.30.790">
    <property type="match status" value="1"/>
</dbReference>
<dbReference type="HAMAP" id="MF_00402">
    <property type="entry name" value="Ribosomal_bL19"/>
    <property type="match status" value="1"/>
</dbReference>
<dbReference type="InterPro" id="IPR001857">
    <property type="entry name" value="Ribosomal_bL19"/>
</dbReference>
<dbReference type="InterPro" id="IPR018257">
    <property type="entry name" value="Ribosomal_bL19_CS"/>
</dbReference>
<dbReference type="InterPro" id="IPR038657">
    <property type="entry name" value="Ribosomal_bL19_sf"/>
</dbReference>
<dbReference type="InterPro" id="IPR008991">
    <property type="entry name" value="Translation_prot_SH3-like_sf"/>
</dbReference>
<dbReference type="NCBIfam" id="TIGR01024">
    <property type="entry name" value="rplS_bact"/>
    <property type="match status" value="1"/>
</dbReference>
<dbReference type="PANTHER" id="PTHR15680:SF9">
    <property type="entry name" value="LARGE RIBOSOMAL SUBUNIT PROTEIN BL19M"/>
    <property type="match status" value="1"/>
</dbReference>
<dbReference type="PANTHER" id="PTHR15680">
    <property type="entry name" value="RIBOSOMAL PROTEIN L19"/>
    <property type="match status" value="1"/>
</dbReference>
<dbReference type="Pfam" id="PF01245">
    <property type="entry name" value="Ribosomal_L19"/>
    <property type="match status" value="1"/>
</dbReference>
<dbReference type="PIRSF" id="PIRSF002191">
    <property type="entry name" value="Ribosomal_L19"/>
    <property type="match status" value="1"/>
</dbReference>
<dbReference type="PRINTS" id="PR00061">
    <property type="entry name" value="RIBOSOMALL19"/>
</dbReference>
<dbReference type="SUPFAM" id="SSF50104">
    <property type="entry name" value="Translation proteins SH3-like domain"/>
    <property type="match status" value="1"/>
</dbReference>
<dbReference type="PROSITE" id="PS01015">
    <property type="entry name" value="RIBOSOMAL_L19"/>
    <property type="match status" value="1"/>
</dbReference>
<feature type="chain" id="PRO_0000252526" description="Large ribosomal subunit protein bL19">
    <location>
        <begin position="1"/>
        <end position="120"/>
    </location>
</feature>
<keyword id="KW-1185">Reference proteome</keyword>
<keyword id="KW-0687">Ribonucleoprotein</keyword>
<keyword id="KW-0689">Ribosomal protein</keyword>
<proteinExistence type="inferred from homology"/>
<name>RL19_CHLL3</name>
<accession>Q3B4A0</accession>
<reference key="1">
    <citation type="submission" date="2005-08" db="EMBL/GenBank/DDBJ databases">
        <title>Complete sequence of Pelodictyon luteolum DSM 273.</title>
        <authorList>
            <consortium name="US DOE Joint Genome Institute"/>
            <person name="Copeland A."/>
            <person name="Lucas S."/>
            <person name="Lapidus A."/>
            <person name="Barry K."/>
            <person name="Detter J.C."/>
            <person name="Glavina T."/>
            <person name="Hammon N."/>
            <person name="Israni S."/>
            <person name="Pitluck S."/>
            <person name="Bryant D."/>
            <person name="Schmutz J."/>
            <person name="Larimer F."/>
            <person name="Land M."/>
            <person name="Kyrpides N."/>
            <person name="Ivanova N."/>
            <person name="Richardson P."/>
        </authorList>
    </citation>
    <scope>NUCLEOTIDE SEQUENCE [LARGE SCALE GENOMIC DNA]</scope>
    <source>
        <strain>DSM 273 / BCRC 81028 / 2530</strain>
    </source>
</reference>
<comment type="function">
    <text evidence="1">This protein is located at the 30S-50S ribosomal subunit interface and may play a role in the structure and function of the aminoacyl-tRNA binding site.</text>
</comment>
<comment type="similarity">
    <text evidence="1">Belongs to the bacterial ribosomal protein bL19 family.</text>
</comment>
<evidence type="ECO:0000255" key="1">
    <source>
        <dbReference type="HAMAP-Rule" id="MF_00402"/>
    </source>
</evidence>
<evidence type="ECO:0000305" key="2"/>
<sequence length="120" mass="13196">MDQLIQLVEATQPGVECPALNPGDTVRIQLRVIEGEKERLQAFEGVVISDRGAGASKTITVRKISHGVGVERIIPVNSPNIESVTVLKHGKARRSKLFYLRKRTGKAALKVKERKVSEQA</sequence>
<gene>
    <name evidence="1" type="primary">rplS</name>
    <name type="ordered locus">Plut_0969</name>
</gene>
<protein>
    <recommendedName>
        <fullName evidence="1">Large ribosomal subunit protein bL19</fullName>
    </recommendedName>
    <alternativeName>
        <fullName evidence="2">50S ribosomal protein L19</fullName>
    </alternativeName>
</protein>
<organism>
    <name type="scientific">Chlorobium luteolum (strain DSM 273 / BCRC 81028 / 2530)</name>
    <name type="common">Pelodictyon luteolum</name>
    <dbReference type="NCBI Taxonomy" id="319225"/>
    <lineage>
        <taxon>Bacteria</taxon>
        <taxon>Pseudomonadati</taxon>
        <taxon>Chlorobiota</taxon>
        <taxon>Chlorobiia</taxon>
        <taxon>Chlorobiales</taxon>
        <taxon>Chlorobiaceae</taxon>
        <taxon>Chlorobium/Pelodictyon group</taxon>
        <taxon>Pelodictyon</taxon>
    </lineage>
</organism>